<feature type="chain" id="PRO_0000223649" description="Serine/threonine-protein phosphatase 4 catalytic subunit">
    <location>
        <begin position="1"/>
        <end position="310"/>
    </location>
</feature>
<feature type="active site" description="Proton donor" evidence="1">
    <location>
        <position position="114"/>
    </location>
</feature>
<feature type="binding site" evidence="1">
    <location>
        <position position="53"/>
    </location>
    <ligand>
        <name>Mn(2+)</name>
        <dbReference type="ChEBI" id="CHEBI:29035"/>
        <label>1</label>
    </ligand>
</feature>
<feature type="binding site" evidence="1">
    <location>
        <position position="55"/>
    </location>
    <ligand>
        <name>Mn(2+)</name>
        <dbReference type="ChEBI" id="CHEBI:29035"/>
        <label>1</label>
    </ligand>
</feature>
<feature type="binding site" evidence="1">
    <location>
        <position position="81"/>
    </location>
    <ligand>
        <name>Mn(2+)</name>
        <dbReference type="ChEBI" id="CHEBI:29035"/>
        <label>1</label>
    </ligand>
</feature>
<feature type="binding site" evidence="1">
    <location>
        <position position="81"/>
    </location>
    <ligand>
        <name>Mn(2+)</name>
        <dbReference type="ChEBI" id="CHEBI:29035"/>
        <label>2</label>
    </ligand>
</feature>
<feature type="binding site" evidence="1">
    <location>
        <position position="113"/>
    </location>
    <ligand>
        <name>Mn(2+)</name>
        <dbReference type="ChEBI" id="CHEBI:29035"/>
        <label>2</label>
    </ligand>
</feature>
<feature type="binding site" evidence="1">
    <location>
        <position position="163"/>
    </location>
    <ligand>
        <name>Mn(2+)</name>
        <dbReference type="ChEBI" id="CHEBI:29035"/>
        <label>2</label>
    </ligand>
</feature>
<feature type="binding site" evidence="1">
    <location>
        <position position="237"/>
    </location>
    <ligand>
        <name>Mn(2+)</name>
        <dbReference type="ChEBI" id="CHEBI:29035"/>
        <label>2</label>
    </ligand>
</feature>
<feature type="modified residue" description="Leucine methyl ester" evidence="1">
    <location>
        <position position="310"/>
    </location>
</feature>
<proteinExistence type="inferred from homology"/>
<evidence type="ECO:0000250" key="1"/>
<evidence type="ECO:0000305" key="2"/>
<reference key="1">
    <citation type="journal article" date="2004" name="Science">
        <title>The Ashbya gossypii genome as a tool for mapping the ancient Saccharomyces cerevisiae genome.</title>
        <authorList>
            <person name="Dietrich F.S."/>
            <person name="Voegeli S."/>
            <person name="Brachat S."/>
            <person name="Lerch A."/>
            <person name="Gates K."/>
            <person name="Steiner S."/>
            <person name="Mohr C."/>
            <person name="Poehlmann R."/>
            <person name="Luedi P."/>
            <person name="Choi S."/>
            <person name="Wing R.A."/>
            <person name="Flavier A."/>
            <person name="Gaffney T.D."/>
            <person name="Philippsen P."/>
        </authorList>
    </citation>
    <scope>NUCLEOTIDE SEQUENCE [LARGE SCALE GENOMIC DNA]</scope>
    <source>
        <strain>ATCC 10895 / CBS 109.51 / FGSC 9923 / NRRL Y-1056</strain>
    </source>
</reference>
<reference key="2">
    <citation type="journal article" date="2013" name="G3 (Bethesda)">
        <title>Genomes of Ashbya fungi isolated from insects reveal four mating-type loci, numerous translocations, lack of transposons, and distinct gene duplications.</title>
        <authorList>
            <person name="Dietrich F.S."/>
            <person name="Voegeli S."/>
            <person name="Kuo S."/>
            <person name="Philippsen P."/>
        </authorList>
    </citation>
    <scope>GENOME REANNOTATION</scope>
    <source>
        <strain>ATCC 10895 / CBS 109.51 / FGSC 9923 / NRRL Y-1056</strain>
    </source>
</reference>
<protein>
    <recommendedName>
        <fullName>Serine/threonine-protein phosphatase 4 catalytic subunit</fullName>
        <shortName>PP4C</shortName>
        <ecNumber>3.1.3.16</ecNumber>
    </recommendedName>
</protein>
<name>PP4C_EREGS</name>
<comment type="function">
    <text evidence="1">Involved in the dephosphorylation and activation of the transcription factor GLN3 in response to nutrient availability. Forms the histone H2A phosphatase complex in association with the regulatory subunits PSY2 and PSY4, which dephosphorylates H2AS128ph (gamma-H2A) that has been displaced from sites of DNA lesions in the double-stranded DNA break repair process. Dephosphorylation is necessary for efficient recovery from the DNA damage checkpoint (By similarity).</text>
</comment>
<comment type="catalytic activity">
    <reaction>
        <text>O-phospho-L-seryl-[protein] + H2O = L-seryl-[protein] + phosphate</text>
        <dbReference type="Rhea" id="RHEA:20629"/>
        <dbReference type="Rhea" id="RHEA-COMP:9863"/>
        <dbReference type="Rhea" id="RHEA-COMP:11604"/>
        <dbReference type="ChEBI" id="CHEBI:15377"/>
        <dbReference type="ChEBI" id="CHEBI:29999"/>
        <dbReference type="ChEBI" id="CHEBI:43474"/>
        <dbReference type="ChEBI" id="CHEBI:83421"/>
        <dbReference type="EC" id="3.1.3.16"/>
    </reaction>
</comment>
<comment type="catalytic activity">
    <reaction>
        <text>O-phospho-L-threonyl-[protein] + H2O = L-threonyl-[protein] + phosphate</text>
        <dbReference type="Rhea" id="RHEA:47004"/>
        <dbReference type="Rhea" id="RHEA-COMP:11060"/>
        <dbReference type="Rhea" id="RHEA-COMP:11605"/>
        <dbReference type="ChEBI" id="CHEBI:15377"/>
        <dbReference type="ChEBI" id="CHEBI:30013"/>
        <dbReference type="ChEBI" id="CHEBI:43474"/>
        <dbReference type="ChEBI" id="CHEBI:61977"/>
        <dbReference type="EC" id="3.1.3.16"/>
    </reaction>
</comment>
<comment type="cofactor">
    <cofactor evidence="1">
        <name>Mn(2+)</name>
        <dbReference type="ChEBI" id="CHEBI:29035"/>
    </cofactor>
    <text evidence="1">Binds 2 manganese ions per subunit.</text>
</comment>
<comment type="subunit">
    <text evidence="1">Catalytic subunit of the histone H2A phosphatase complex (HTP-C) containing PPH3, PSY2 and PSY4.</text>
</comment>
<comment type="subcellular location">
    <subcellularLocation>
        <location evidence="1">Cytoplasm</location>
    </subcellularLocation>
    <subcellularLocation>
        <location evidence="1">Nucleus</location>
    </subcellularLocation>
</comment>
<comment type="similarity">
    <text evidence="2">Belongs to the PPP phosphatase family. PP-4 (PP-X) subfamily.</text>
</comment>
<organism>
    <name type="scientific">Eremothecium gossypii (strain ATCC 10895 / CBS 109.51 / FGSC 9923 / NRRL Y-1056)</name>
    <name type="common">Yeast</name>
    <name type="synonym">Ashbya gossypii</name>
    <dbReference type="NCBI Taxonomy" id="284811"/>
    <lineage>
        <taxon>Eukaryota</taxon>
        <taxon>Fungi</taxon>
        <taxon>Dikarya</taxon>
        <taxon>Ascomycota</taxon>
        <taxon>Saccharomycotina</taxon>
        <taxon>Saccharomycetes</taxon>
        <taxon>Saccharomycetales</taxon>
        <taxon>Saccharomycetaceae</taxon>
        <taxon>Eremothecium</taxon>
    </lineage>
</organism>
<sequence>MAGMQLDEIIEYLRYSKHIPEETIYELCLKCQELLVNESNVTHVDTPVTICGDIHGQLHDLLTLFEKSEGIEKNRFIFLGDFVDRGFYSLESFLLLLCYKLRYPDRITLIRGNHETRQITKVYGFYDEVIRKYGNSNVWRYCCEVFDYLSLGAIINGQIFCVHGGLSPDVMTVDEIRSIDRKQEVPHEGAMCDLLWSDPDEVDTWSLSPRGAGFLFGKNEVDQFLHRNDISLIARAHQLVMEGYKEMFDGGLVTVWSAPNYCYRCGNVAAVLRIDDDLSRNYTIFEAVPAQDNRGNAIIPTKKPQMDYFL</sequence>
<keyword id="KW-0963">Cytoplasm</keyword>
<keyword id="KW-0378">Hydrolase</keyword>
<keyword id="KW-0464">Manganese</keyword>
<keyword id="KW-0479">Metal-binding</keyword>
<keyword id="KW-0488">Methylation</keyword>
<keyword id="KW-0539">Nucleus</keyword>
<keyword id="KW-0904">Protein phosphatase</keyword>
<keyword id="KW-1185">Reference proteome</keyword>
<accession>Q74ZR2</accession>
<gene>
    <name type="primary">PPH3</name>
    <name type="ordered locus">AGR136W</name>
</gene>
<dbReference type="EC" id="3.1.3.16"/>
<dbReference type="EMBL" id="AE016820">
    <property type="protein sequence ID" value="AAS54626.2"/>
    <property type="molecule type" value="Genomic_DNA"/>
</dbReference>
<dbReference type="RefSeq" id="NP_986802.2">
    <property type="nucleotide sequence ID" value="NM_211864.2"/>
</dbReference>
<dbReference type="SMR" id="Q74ZR2"/>
<dbReference type="FunCoup" id="Q74ZR2">
    <property type="interactions" value="116"/>
</dbReference>
<dbReference type="STRING" id="284811.Q74ZR2"/>
<dbReference type="EnsemblFungi" id="AAS54626">
    <property type="protein sequence ID" value="AAS54626"/>
    <property type="gene ID" value="AGOS_AGR136W"/>
</dbReference>
<dbReference type="GeneID" id="4623104"/>
<dbReference type="KEGG" id="ago:AGOS_AGR136W"/>
<dbReference type="eggNOG" id="KOG0372">
    <property type="taxonomic scope" value="Eukaryota"/>
</dbReference>
<dbReference type="HOGENOM" id="CLU_004962_8_1_1"/>
<dbReference type="InParanoid" id="Q74ZR2"/>
<dbReference type="OMA" id="QSTMPID"/>
<dbReference type="OrthoDB" id="1930084at2759"/>
<dbReference type="Proteomes" id="UP000000591">
    <property type="component" value="Chromosome VII"/>
</dbReference>
<dbReference type="GO" id="GO:0005737">
    <property type="term" value="C:cytoplasm"/>
    <property type="evidence" value="ECO:0000318"/>
    <property type="project" value="GO_Central"/>
</dbReference>
<dbReference type="GO" id="GO:0034399">
    <property type="term" value="C:nuclear periphery"/>
    <property type="evidence" value="ECO:0007669"/>
    <property type="project" value="EnsemblFungi"/>
</dbReference>
<dbReference type="GO" id="GO:0005634">
    <property type="term" value="C:nucleus"/>
    <property type="evidence" value="ECO:0000318"/>
    <property type="project" value="GO_Central"/>
</dbReference>
<dbReference type="GO" id="GO:0030289">
    <property type="term" value="C:protein phosphatase 4 complex"/>
    <property type="evidence" value="ECO:0007669"/>
    <property type="project" value="EnsemblFungi"/>
</dbReference>
<dbReference type="GO" id="GO:0046872">
    <property type="term" value="F:metal ion binding"/>
    <property type="evidence" value="ECO:0007669"/>
    <property type="project" value="UniProtKB-KW"/>
</dbReference>
<dbReference type="GO" id="GO:0004722">
    <property type="term" value="F:protein serine/threonine phosphatase activity"/>
    <property type="evidence" value="ECO:0000318"/>
    <property type="project" value="GO_Central"/>
</dbReference>
<dbReference type="GO" id="GO:0000724">
    <property type="term" value="P:double-strand break repair via homologous recombination"/>
    <property type="evidence" value="ECO:0000318"/>
    <property type="project" value="GO_Central"/>
</dbReference>
<dbReference type="GO" id="GO:0051598">
    <property type="term" value="P:meiotic recombination checkpoint signaling"/>
    <property type="evidence" value="ECO:0007669"/>
    <property type="project" value="EnsemblFungi"/>
</dbReference>
<dbReference type="GO" id="GO:2000002">
    <property type="term" value="P:negative regulation of DNA damage checkpoint"/>
    <property type="evidence" value="ECO:0007669"/>
    <property type="project" value="EnsemblFungi"/>
</dbReference>
<dbReference type="GO" id="GO:1902660">
    <property type="term" value="P:negative regulation of glucose mediated signaling pathway"/>
    <property type="evidence" value="ECO:0007669"/>
    <property type="project" value="EnsemblFungi"/>
</dbReference>
<dbReference type="GO" id="GO:2001034">
    <property type="term" value="P:positive regulation of double-strand break repair via nonhomologous end joining"/>
    <property type="evidence" value="ECO:0007669"/>
    <property type="project" value="EnsemblFungi"/>
</dbReference>
<dbReference type="GO" id="GO:1903432">
    <property type="term" value="P:regulation of TORC1 signaling"/>
    <property type="evidence" value="ECO:0007669"/>
    <property type="project" value="EnsemblFungi"/>
</dbReference>
<dbReference type="CDD" id="cd07415">
    <property type="entry name" value="MPP_PP2A_PP4_PP6"/>
    <property type="match status" value="1"/>
</dbReference>
<dbReference type="FunFam" id="3.60.21.10:FF:000005">
    <property type="entry name" value="Serine/threonine-protein phosphatase"/>
    <property type="match status" value="1"/>
</dbReference>
<dbReference type="Gene3D" id="3.60.21.10">
    <property type="match status" value="1"/>
</dbReference>
<dbReference type="InterPro" id="IPR004843">
    <property type="entry name" value="Calcineurin-like_PHP_ApaH"/>
</dbReference>
<dbReference type="InterPro" id="IPR029052">
    <property type="entry name" value="Metallo-depent_PP-like"/>
</dbReference>
<dbReference type="InterPro" id="IPR047129">
    <property type="entry name" value="PPA2-like"/>
</dbReference>
<dbReference type="InterPro" id="IPR006186">
    <property type="entry name" value="Ser/Thr-sp_prot-phosphatase"/>
</dbReference>
<dbReference type="PANTHER" id="PTHR45619">
    <property type="entry name" value="SERINE/THREONINE-PROTEIN PHOSPHATASE PP2A-RELATED"/>
    <property type="match status" value="1"/>
</dbReference>
<dbReference type="Pfam" id="PF00149">
    <property type="entry name" value="Metallophos"/>
    <property type="match status" value="1"/>
</dbReference>
<dbReference type="PRINTS" id="PR00114">
    <property type="entry name" value="STPHPHTASE"/>
</dbReference>
<dbReference type="SMART" id="SM00156">
    <property type="entry name" value="PP2Ac"/>
    <property type="match status" value="1"/>
</dbReference>
<dbReference type="SUPFAM" id="SSF56300">
    <property type="entry name" value="Metallo-dependent phosphatases"/>
    <property type="match status" value="1"/>
</dbReference>
<dbReference type="PROSITE" id="PS00125">
    <property type="entry name" value="SER_THR_PHOSPHATASE"/>
    <property type="match status" value="1"/>
</dbReference>